<gene>
    <name evidence="1" type="primary">rplJ</name>
    <name type="ordered locus">BbuZS7_0393</name>
</gene>
<reference key="1">
    <citation type="journal article" date="2011" name="J. Bacteriol.">
        <title>Whole-genome sequences of thirteen isolates of Borrelia burgdorferi.</title>
        <authorList>
            <person name="Schutzer S.E."/>
            <person name="Fraser-Liggett C.M."/>
            <person name="Casjens S.R."/>
            <person name="Qiu W.G."/>
            <person name="Dunn J.J."/>
            <person name="Mongodin E.F."/>
            <person name="Luft B.J."/>
        </authorList>
    </citation>
    <scope>NUCLEOTIDE SEQUENCE [LARGE SCALE GENOMIC DNA]</scope>
    <source>
        <strain>ZS7</strain>
    </source>
</reference>
<protein>
    <recommendedName>
        <fullName evidence="1">Large ribosomal subunit protein uL10</fullName>
    </recommendedName>
    <alternativeName>
        <fullName evidence="2">50S ribosomal protein L10</fullName>
    </alternativeName>
</protein>
<feature type="chain" id="PRO_1000120921" description="Large ribosomal subunit protein uL10">
    <location>
        <begin position="1"/>
        <end position="162"/>
    </location>
</feature>
<dbReference type="EMBL" id="CP001205">
    <property type="protein sequence ID" value="ACK75000.1"/>
    <property type="molecule type" value="Genomic_DNA"/>
</dbReference>
<dbReference type="RefSeq" id="WP_002657848.1">
    <property type="nucleotide sequence ID" value="NC_011728.1"/>
</dbReference>
<dbReference type="SMR" id="B7J1W3"/>
<dbReference type="GeneID" id="56567819"/>
<dbReference type="KEGG" id="bbz:BbuZS7_0393"/>
<dbReference type="HOGENOM" id="CLU_092227_1_2_12"/>
<dbReference type="Proteomes" id="UP000006901">
    <property type="component" value="Chromosome"/>
</dbReference>
<dbReference type="GO" id="GO:0015934">
    <property type="term" value="C:large ribosomal subunit"/>
    <property type="evidence" value="ECO:0007669"/>
    <property type="project" value="InterPro"/>
</dbReference>
<dbReference type="GO" id="GO:0070180">
    <property type="term" value="F:large ribosomal subunit rRNA binding"/>
    <property type="evidence" value="ECO:0007669"/>
    <property type="project" value="UniProtKB-UniRule"/>
</dbReference>
<dbReference type="GO" id="GO:0003735">
    <property type="term" value="F:structural constituent of ribosome"/>
    <property type="evidence" value="ECO:0007669"/>
    <property type="project" value="InterPro"/>
</dbReference>
<dbReference type="GO" id="GO:0006412">
    <property type="term" value="P:translation"/>
    <property type="evidence" value="ECO:0007669"/>
    <property type="project" value="UniProtKB-UniRule"/>
</dbReference>
<dbReference type="CDD" id="cd05797">
    <property type="entry name" value="Ribosomal_L10"/>
    <property type="match status" value="1"/>
</dbReference>
<dbReference type="FunFam" id="3.30.70.1730:FF:000028">
    <property type="entry name" value="50S ribosomal protein L10"/>
    <property type="match status" value="1"/>
</dbReference>
<dbReference type="Gene3D" id="3.30.70.1730">
    <property type="match status" value="1"/>
</dbReference>
<dbReference type="Gene3D" id="6.10.250.2350">
    <property type="match status" value="1"/>
</dbReference>
<dbReference type="HAMAP" id="MF_00362">
    <property type="entry name" value="Ribosomal_uL10"/>
    <property type="match status" value="1"/>
</dbReference>
<dbReference type="InterPro" id="IPR001790">
    <property type="entry name" value="Ribosomal_uL10"/>
</dbReference>
<dbReference type="InterPro" id="IPR043141">
    <property type="entry name" value="Ribosomal_uL10-like_sf"/>
</dbReference>
<dbReference type="InterPro" id="IPR022973">
    <property type="entry name" value="Ribosomal_uL10_bac"/>
</dbReference>
<dbReference type="InterPro" id="IPR047865">
    <property type="entry name" value="Ribosomal_uL10_bac_type"/>
</dbReference>
<dbReference type="InterPro" id="IPR002363">
    <property type="entry name" value="Ribosomal_uL10_CS_bac"/>
</dbReference>
<dbReference type="NCBIfam" id="NF000955">
    <property type="entry name" value="PRK00099.1-1"/>
    <property type="match status" value="1"/>
</dbReference>
<dbReference type="PANTHER" id="PTHR11560">
    <property type="entry name" value="39S RIBOSOMAL PROTEIN L10, MITOCHONDRIAL"/>
    <property type="match status" value="1"/>
</dbReference>
<dbReference type="Pfam" id="PF00466">
    <property type="entry name" value="Ribosomal_L10"/>
    <property type="match status" value="1"/>
</dbReference>
<dbReference type="SUPFAM" id="SSF160369">
    <property type="entry name" value="Ribosomal protein L10-like"/>
    <property type="match status" value="1"/>
</dbReference>
<dbReference type="PROSITE" id="PS01109">
    <property type="entry name" value="RIBOSOMAL_L10"/>
    <property type="match status" value="1"/>
</dbReference>
<keyword id="KW-0687">Ribonucleoprotein</keyword>
<keyword id="KW-0689">Ribosomal protein</keyword>
<keyword id="KW-0694">RNA-binding</keyword>
<keyword id="KW-0699">rRNA-binding</keyword>
<name>RL10_BORBZ</name>
<comment type="function">
    <text evidence="1">Forms part of the ribosomal stalk, playing a central role in the interaction of the ribosome with GTP-bound translation factors.</text>
</comment>
<comment type="subunit">
    <text evidence="1">Part of the ribosomal stalk of the 50S ribosomal subunit. The N-terminus interacts with L11 and the large rRNA to form the base of the stalk. The C-terminus forms an elongated spine to which L12 dimers bind in a sequential fashion forming a multimeric L10(L12)X complex.</text>
</comment>
<comment type="similarity">
    <text evidence="1">Belongs to the universal ribosomal protein uL10 family.</text>
</comment>
<sequence>MSAKINAKKLEMFDLLKQFIDSKQNLFFLDYRGLNVAQLTELRNKIEGEHGSLKVVKNNIMKMVLKEKNINVVDSCLVGPTVVVTALEEANVIAKIFYDFVKSSTLKVKGGFVLGEFYDEAKVQAYSKLPTKKESISLFASVLKAPVSKLARTLKALADVKN</sequence>
<accession>B7J1W3</accession>
<evidence type="ECO:0000255" key="1">
    <source>
        <dbReference type="HAMAP-Rule" id="MF_00362"/>
    </source>
</evidence>
<evidence type="ECO:0000305" key="2"/>
<proteinExistence type="inferred from homology"/>
<organism>
    <name type="scientific">Borreliella burgdorferi (strain ZS7)</name>
    <name type="common">Borrelia burgdorferi</name>
    <dbReference type="NCBI Taxonomy" id="445985"/>
    <lineage>
        <taxon>Bacteria</taxon>
        <taxon>Pseudomonadati</taxon>
        <taxon>Spirochaetota</taxon>
        <taxon>Spirochaetia</taxon>
        <taxon>Spirochaetales</taxon>
        <taxon>Borreliaceae</taxon>
        <taxon>Borreliella</taxon>
    </lineage>
</organism>